<keyword id="KW-0687">Ribonucleoprotein</keyword>
<keyword id="KW-0689">Ribosomal protein</keyword>
<keyword id="KW-0694">RNA-binding</keyword>
<keyword id="KW-0699">rRNA-binding</keyword>
<evidence type="ECO:0000255" key="1">
    <source>
        <dbReference type="HAMAP-Rule" id="MF_01325"/>
    </source>
</evidence>
<evidence type="ECO:0000256" key="2">
    <source>
        <dbReference type="SAM" id="MobiDB-lite"/>
    </source>
</evidence>
<evidence type="ECO:0000305" key="3"/>
<protein>
    <recommendedName>
        <fullName evidence="1">Large ribosomal subunit protein uL3</fullName>
    </recommendedName>
    <alternativeName>
        <fullName evidence="3">50S ribosomal protein L3</fullName>
    </alternativeName>
</protein>
<name>RL3_THEON</name>
<gene>
    <name evidence="1" type="primary">rpl3</name>
    <name type="ordered locus">TON_0066</name>
</gene>
<accession>B6YSL3</accession>
<proteinExistence type="inferred from homology"/>
<comment type="function">
    <text evidence="1">One of the primary rRNA binding proteins, it binds directly near the 3'-end of the 23S rRNA, where it nucleates assembly of the 50S subunit.</text>
</comment>
<comment type="subunit">
    <text evidence="1">Part of the 50S ribosomal subunit. Forms a cluster with proteins L14 and L24e.</text>
</comment>
<comment type="similarity">
    <text evidence="1">Belongs to the universal ribosomal protein uL3 family.</text>
</comment>
<sequence>MGKIHRPRRGSLAYSPRKRAKSIVPRIRKWPKDSEVRMLGFAGYKAGMTHILMIDDRPGLTKGKEIFMPVTVVEVPPLFVYGIRAYRQGYLGLETATEVWFHELNDYVKRRIKTLPKDYNEEAFQAKLGQLEDLVNDGEIVDVRLLVHTQPWLIKLKKKPEVMEYAIGGDDVKAKFDYAKEKIGKELRASEVLHEGELLDVIAVTKGKGTQGPVKRWGIKIQFHKAQRAGKGRHVGNLGPWHPTRVMWTVPQAGQMGFHHRTEFNKRLIAIGENGKLKLDEKNEIEITPKGGFPHYGIIRSDFLMIQGTIPGSFKRIIRVRPAIRPPKKKPPVERPQITYISRESKQ</sequence>
<reference key="1">
    <citation type="journal article" date="2008" name="J. Bacteriol.">
        <title>The complete genome sequence of Thermococcus onnurineus NA1 reveals a mixed heterotrophic and carboxydotrophic metabolism.</title>
        <authorList>
            <person name="Lee H.S."/>
            <person name="Kang S.G."/>
            <person name="Bae S.S."/>
            <person name="Lim J.K."/>
            <person name="Cho Y."/>
            <person name="Kim Y.J."/>
            <person name="Jeon J.H."/>
            <person name="Cha S.-S."/>
            <person name="Kwon K.K."/>
            <person name="Kim H.-T."/>
            <person name="Park C.-J."/>
            <person name="Lee H.-W."/>
            <person name="Kim S.I."/>
            <person name="Chun J."/>
            <person name="Colwell R.R."/>
            <person name="Kim S.-J."/>
            <person name="Lee J.-H."/>
        </authorList>
    </citation>
    <scope>NUCLEOTIDE SEQUENCE [LARGE SCALE GENOMIC DNA]</scope>
    <source>
        <strain>NA1</strain>
    </source>
</reference>
<dbReference type="EMBL" id="CP000855">
    <property type="protein sequence ID" value="ACJ15550.1"/>
    <property type="molecule type" value="Genomic_DNA"/>
</dbReference>
<dbReference type="RefSeq" id="WP_012571023.1">
    <property type="nucleotide sequence ID" value="NC_011529.1"/>
</dbReference>
<dbReference type="SMR" id="B6YSL3"/>
<dbReference type="STRING" id="523850.TON_0066"/>
<dbReference type="GeneID" id="7017712"/>
<dbReference type="KEGG" id="ton:TON_0066"/>
<dbReference type="PATRIC" id="fig|523850.10.peg.66"/>
<dbReference type="eggNOG" id="arCOG04070">
    <property type="taxonomic scope" value="Archaea"/>
</dbReference>
<dbReference type="HOGENOM" id="CLU_033361_2_0_2"/>
<dbReference type="OrthoDB" id="6121at2157"/>
<dbReference type="Proteomes" id="UP000002727">
    <property type="component" value="Chromosome"/>
</dbReference>
<dbReference type="GO" id="GO:0022625">
    <property type="term" value="C:cytosolic large ribosomal subunit"/>
    <property type="evidence" value="ECO:0007669"/>
    <property type="project" value="TreeGrafter"/>
</dbReference>
<dbReference type="GO" id="GO:0019843">
    <property type="term" value="F:rRNA binding"/>
    <property type="evidence" value="ECO:0007669"/>
    <property type="project" value="UniProtKB-UniRule"/>
</dbReference>
<dbReference type="GO" id="GO:0003735">
    <property type="term" value="F:structural constituent of ribosome"/>
    <property type="evidence" value="ECO:0007669"/>
    <property type="project" value="InterPro"/>
</dbReference>
<dbReference type="GO" id="GO:0006412">
    <property type="term" value="P:translation"/>
    <property type="evidence" value="ECO:0007669"/>
    <property type="project" value="UniProtKB-UniRule"/>
</dbReference>
<dbReference type="FunFam" id="3.30.1430.10:FF:000005">
    <property type="entry name" value="50S ribosomal protein L3"/>
    <property type="match status" value="1"/>
</dbReference>
<dbReference type="Gene3D" id="3.30.1430.10">
    <property type="match status" value="1"/>
</dbReference>
<dbReference type="Gene3D" id="4.10.960.10">
    <property type="entry name" value="Ribosomal protein L3, domain 3"/>
    <property type="match status" value="1"/>
</dbReference>
<dbReference type="Gene3D" id="2.40.30.10">
    <property type="entry name" value="Translation factors"/>
    <property type="match status" value="1"/>
</dbReference>
<dbReference type="HAMAP" id="MF_01325_A">
    <property type="entry name" value="Ribosomal_uL3_A"/>
    <property type="match status" value="1"/>
</dbReference>
<dbReference type="InterPro" id="IPR045077">
    <property type="entry name" value="L3_arc_euk"/>
</dbReference>
<dbReference type="InterPro" id="IPR044892">
    <property type="entry name" value="Ribosomal_L3_dom_3_arc_sf"/>
</dbReference>
<dbReference type="InterPro" id="IPR000597">
    <property type="entry name" value="Ribosomal_uL3"/>
</dbReference>
<dbReference type="InterPro" id="IPR019928">
    <property type="entry name" value="Ribosomal_uL3_arc"/>
</dbReference>
<dbReference type="InterPro" id="IPR019926">
    <property type="entry name" value="Ribosomal_uL3_CS"/>
</dbReference>
<dbReference type="InterPro" id="IPR009000">
    <property type="entry name" value="Transl_B-barrel_sf"/>
</dbReference>
<dbReference type="NCBIfam" id="TIGR03626">
    <property type="entry name" value="L3_arch"/>
    <property type="match status" value="1"/>
</dbReference>
<dbReference type="NCBIfam" id="NF003261">
    <property type="entry name" value="PRK04231.1"/>
    <property type="match status" value="1"/>
</dbReference>
<dbReference type="PANTHER" id="PTHR11363">
    <property type="entry name" value="60S RIBOSOMAL PROTEIN L3-RELATED"/>
    <property type="match status" value="1"/>
</dbReference>
<dbReference type="PANTHER" id="PTHR11363:SF5">
    <property type="entry name" value="LARGE RIBOSOMAL SUBUNIT PROTEIN UL3"/>
    <property type="match status" value="1"/>
</dbReference>
<dbReference type="Pfam" id="PF00297">
    <property type="entry name" value="Ribosomal_L3"/>
    <property type="match status" value="1"/>
</dbReference>
<dbReference type="SUPFAM" id="SSF50447">
    <property type="entry name" value="Translation proteins"/>
    <property type="match status" value="1"/>
</dbReference>
<dbReference type="PROSITE" id="PS00474">
    <property type="entry name" value="RIBOSOMAL_L3"/>
    <property type="match status" value="1"/>
</dbReference>
<feature type="chain" id="PRO_1000141934" description="Large ribosomal subunit protein uL3">
    <location>
        <begin position="1"/>
        <end position="347"/>
    </location>
</feature>
<feature type="region of interest" description="Disordered" evidence="2">
    <location>
        <begin position="325"/>
        <end position="347"/>
    </location>
</feature>
<organism>
    <name type="scientific">Thermococcus onnurineus (strain NA1)</name>
    <dbReference type="NCBI Taxonomy" id="523850"/>
    <lineage>
        <taxon>Archaea</taxon>
        <taxon>Methanobacteriati</taxon>
        <taxon>Methanobacteriota</taxon>
        <taxon>Thermococci</taxon>
        <taxon>Thermococcales</taxon>
        <taxon>Thermococcaceae</taxon>
        <taxon>Thermococcus</taxon>
    </lineage>
</organism>